<sequence>MKSYPLLSTIDQPADLRGLSRAELKQLAQELRDHVLTSVSQTGGHLSSNLGTVELTIALHHVFNTPQDRLVWDVGHQTYPHKILTGRRDRMAGLRQLGGISGFPRRDESEYDTFGTAHSSTSISAALGMALAAKIKGEDRRSVAIIGDGAMTAGMAFEALNNAGVSGANMLVVLNDNDMSISPPVGALNRYFARLMSGRFYSAARQGAKSVLKNAPPLLELARRFEEHAKGMIVPSTIFEEFGFTYVGPIDGHDLDSLIPTLENLRDRKGPQFLHVVTKKGYGYKLAEADPVAYHGPGKFNPAEGLKKAAPGKPSFTQVFGQWLCDMAAKDTRLVGITPAMREGSGMVEFEQRFPDRYFDVGIAEQHAVTFAAGLACEGLKPVVAIYSTFLQRGYDQLIHDVAIQNLPVVFALDRAGIVGADGATHAGAYDIAYVRCVPHLSLIAPADENECRQALTAAFEQQHPVAVRYPRGAGVGVAVQSELTALPWGRGELRREARGGGRRIAILAFGTLLYPALAAAEKLDATVANMRFIKPLDTELVLSLARSHEALVTVEEGCLQGGAGSAVLEALQAAGVNLPVLTLGLPDEFVEHGDPAKLLAQLGLDAAGIEQSILKRFGAKLELVRPAING</sequence>
<proteinExistence type="inferred from homology"/>
<organism>
    <name type="scientific">Methylibium petroleiphilum (strain ATCC BAA-1232 / LMG 22953 / PM1)</name>
    <dbReference type="NCBI Taxonomy" id="420662"/>
    <lineage>
        <taxon>Bacteria</taxon>
        <taxon>Pseudomonadati</taxon>
        <taxon>Pseudomonadota</taxon>
        <taxon>Betaproteobacteria</taxon>
        <taxon>Burkholderiales</taxon>
        <taxon>Sphaerotilaceae</taxon>
        <taxon>Methylibium</taxon>
    </lineage>
</organism>
<name>DXS_METPP</name>
<feature type="chain" id="PRO_1000071997" description="1-deoxy-D-xylulose-5-phosphate synthase">
    <location>
        <begin position="1"/>
        <end position="631"/>
    </location>
</feature>
<feature type="binding site" evidence="1">
    <location>
        <position position="76"/>
    </location>
    <ligand>
        <name>thiamine diphosphate</name>
        <dbReference type="ChEBI" id="CHEBI:58937"/>
    </ligand>
</feature>
<feature type="binding site" evidence="1">
    <location>
        <begin position="117"/>
        <end position="119"/>
    </location>
    <ligand>
        <name>thiamine diphosphate</name>
        <dbReference type="ChEBI" id="CHEBI:58937"/>
    </ligand>
</feature>
<feature type="binding site" evidence="1">
    <location>
        <position position="148"/>
    </location>
    <ligand>
        <name>Mg(2+)</name>
        <dbReference type="ChEBI" id="CHEBI:18420"/>
    </ligand>
</feature>
<feature type="binding site" evidence="1">
    <location>
        <begin position="149"/>
        <end position="150"/>
    </location>
    <ligand>
        <name>thiamine diphosphate</name>
        <dbReference type="ChEBI" id="CHEBI:58937"/>
    </ligand>
</feature>
<feature type="binding site" evidence="1">
    <location>
        <position position="177"/>
    </location>
    <ligand>
        <name>Mg(2+)</name>
        <dbReference type="ChEBI" id="CHEBI:18420"/>
    </ligand>
</feature>
<feature type="binding site" evidence="1">
    <location>
        <position position="177"/>
    </location>
    <ligand>
        <name>thiamine diphosphate</name>
        <dbReference type="ChEBI" id="CHEBI:58937"/>
    </ligand>
</feature>
<feature type="binding site" evidence="1">
    <location>
        <position position="284"/>
    </location>
    <ligand>
        <name>thiamine diphosphate</name>
        <dbReference type="ChEBI" id="CHEBI:58937"/>
    </ligand>
</feature>
<feature type="binding site" evidence="1">
    <location>
        <position position="365"/>
    </location>
    <ligand>
        <name>thiamine diphosphate</name>
        <dbReference type="ChEBI" id="CHEBI:58937"/>
    </ligand>
</feature>
<keyword id="KW-0414">Isoprene biosynthesis</keyword>
<keyword id="KW-0460">Magnesium</keyword>
<keyword id="KW-0479">Metal-binding</keyword>
<keyword id="KW-1185">Reference proteome</keyword>
<keyword id="KW-0784">Thiamine biosynthesis</keyword>
<keyword id="KW-0786">Thiamine pyrophosphate</keyword>
<keyword id="KW-0808">Transferase</keyword>
<evidence type="ECO:0000255" key="1">
    <source>
        <dbReference type="HAMAP-Rule" id="MF_00315"/>
    </source>
</evidence>
<comment type="function">
    <text evidence="1">Catalyzes the acyloin condensation reaction between C atoms 2 and 3 of pyruvate and glyceraldehyde 3-phosphate to yield 1-deoxy-D-xylulose-5-phosphate (DXP).</text>
</comment>
<comment type="catalytic activity">
    <reaction evidence="1">
        <text>D-glyceraldehyde 3-phosphate + pyruvate + H(+) = 1-deoxy-D-xylulose 5-phosphate + CO2</text>
        <dbReference type="Rhea" id="RHEA:12605"/>
        <dbReference type="ChEBI" id="CHEBI:15361"/>
        <dbReference type="ChEBI" id="CHEBI:15378"/>
        <dbReference type="ChEBI" id="CHEBI:16526"/>
        <dbReference type="ChEBI" id="CHEBI:57792"/>
        <dbReference type="ChEBI" id="CHEBI:59776"/>
        <dbReference type="EC" id="2.2.1.7"/>
    </reaction>
</comment>
<comment type="cofactor">
    <cofactor evidence="1">
        <name>Mg(2+)</name>
        <dbReference type="ChEBI" id="CHEBI:18420"/>
    </cofactor>
    <text evidence="1">Binds 1 Mg(2+) ion per subunit.</text>
</comment>
<comment type="cofactor">
    <cofactor evidence="1">
        <name>thiamine diphosphate</name>
        <dbReference type="ChEBI" id="CHEBI:58937"/>
    </cofactor>
    <text evidence="1">Binds 1 thiamine pyrophosphate per subunit.</text>
</comment>
<comment type="pathway">
    <text evidence="1">Metabolic intermediate biosynthesis; 1-deoxy-D-xylulose 5-phosphate biosynthesis; 1-deoxy-D-xylulose 5-phosphate from D-glyceraldehyde 3-phosphate and pyruvate: step 1/1.</text>
</comment>
<comment type="subunit">
    <text evidence="1">Homodimer.</text>
</comment>
<comment type="similarity">
    <text evidence="1">Belongs to the transketolase family. DXPS subfamily.</text>
</comment>
<reference key="1">
    <citation type="journal article" date="2007" name="J. Bacteriol.">
        <title>Whole-genome analysis of the methyl tert-butyl ether-degrading beta-proteobacterium Methylibium petroleiphilum PM1.</title>
        <authorList>
            <person name="Kane S.R."/>
            <person name="Chakicherla A.Y."/>
            <person name="Chain P.S.G."/>
            <person name="Schmidt R."/>
            <person name="Shin M.W."/>
            <person name="Legler T.C."/>
            <person name="Scow K.M."/>
            <person name="Larimer F.W."/>
            <person name="Lucas S.M."/>
            <person name="Richardson P.M."/>
            <person name="Hristova K.R."/>
        </authorList>
    </citation>
    <scope>NUCLEOTIDE SEQUENCE [LARGE SCALE GENOMIC DNA]</scope>
    <source>
        <strain>ATCC BAA-1232 / LMG 22953 / PM1</strain>
    </source>
</reference>
<accession>A2SJ46</accession>
<dbReference type="EC" id="2.2.1.7" evidence="1"/>
<dbReference type="EMBL" id="CP000555">
    <property type="protein sequence ID" value="ABM95585.1"/>
    <property type="molecule type" value="Genomic_DNA"/>
</dbReference>
<dbReference type="RefSeq" id="WP_011830215.1">
    <property type="nucleotide sequence ID" value="NC_008825.1"/>
</dbReference>
<dbReference type="SMR" id="A2SJ46"/>
<dbReference type="STRING" id="420662.Mpe_A2631"/>
<dbReference type="KEGG" id="mpt:Mpe_A2631"/>
<dbReference type="eggNOG" id="COG1154">
    <property type="taxonomic scope" value="Bacteria"/>
</dbReference>
<dbReference type="HOGENOM" id="CLU_009227_1_4_4"/>
<dbReference type="UniPathway" id="UPA00064">
    <property type="reaction ID" value="UER00091"/>
</dbReference>
<dbReference type="Proteomes" id="UP000000366">
    <property type="component" value="Chromosome"/>
</dbReference>
<dbReference type="GO" id="GO:0005829">
    <property type="term" value="C:cytosol"/>
    <property type="evidence" value="ECO:0007669"/>
    <property type="project" value="TreeGrafter"/>
</dbReference>
<dbReference type="GO" id="GO:0008661">
    <property type="term" value="F:1-deoxy-D-xylulose-5-phosphate synthase activity"/>
    <property type="evidence" value="ECO:0007669"/>
    <property type="project" value="UniProtKB-UniRule"/>
</dbReference>
<dbReference type="GO" id="GO:0000287">
    <property type="term" value="F:magnesium ion binding"/>
    <property type="evidence" value="ECO:0007669"/>
    <property type="project" value="UniProtKB-UniRule"/>
</dbReference>
<dbReference type="GO" id="GO:0030976">
    <property type="term" value="F:thiamine pyrophosphate binding"/>
    <property type="evidence" value="ECO:0007669"/>
    <property type="project" value="UniProtKB-UniRule"/>
</dbReference>
<dbReference type="GO" id="GO:0052865">
    <property type="term" value="P:1-deoxy-D-xylulose 5-phosphate biosynthetic process"/>
    <property type="evidence" value="ECO:0007669"/>
    <property type="project" value="UniProtKB-UniPathway"/>
</dbReference>
<dbReference type="GO" id="GO:0019288">
    <property type="term" value="P:isopentenyl diphosphate biosynthetic process, methylerythritol 4-phosphate pathway"/>
    <property type="evidence" value="ECO:0007669"/>
    <property type="project" value="TreeGrafter"/>
</dbReference>
<dbReference type="GO" id="GO:0016114">
    <property type="term" value="P:terpenoid biosynthetic process"/>
    <property type="evidence" value="ECO:0007669"/>
    <property type="project" value="UniProtKB-UniRule"/>
</dbReference>
<dbReference type="GO" id="GO:0009228">
    <property type="term" value="P:thiamine biosynthetic process"/>
    <property type="evidence" value="ECO:0007669"/>
    <property type="project" value="UniProtKB-UniRule"/>
</dbReference>
<dbReference type="CDD" id="cd02007">
    <property type="entry name" value="TPP_DXS"/>
    <property type="match status" value="1"/>
</dbReference>
<dbReference type="CDD" id="cd07033">
    <property type="entry name" value="TPP_PYR_DXS_TK_like"/>
    <property type="match status" value="1"/>
</dbReference>
<dbReference type="FunFam" id="3.40.50.920:FF:000002">
    <property type="entry name" value="1-deoxy-D-xylulose-5-phosphate synthase"/>
    <property type="match status" value="1"/>
</dbReference>
<dbReference type="FunFam" id="3.40.50.970:FF:000005">
    <property type="entry name" value="1-deoxy-D-xylulose-5-phosphate synthase"/>
    <property type="match status" value="1"/>
</dbReference>
<dbReference type="Gene3D" id="3.40.50.920">
    <property type="match status" value="1"/>
</dbReference>
<dbReference type="Gene3D" id="3.40.50.970">
    <property type="match status" value="2"/>
</dbReference>
<dbReference type="HAMAP" id="MF_00315">
    <property type="entry name" value="DXP_synth"/>
    <property type="match status" value="1"/>
</dbReference>
<dbReference type="InterPro" id="IPR005477">
    <property type="entry name" value="Dxylulose-5-P_synthase"/>
</dbReference>
<dbReference type="InterPro" id="IPR029061">
    <property type="entry name" value="THDP-binding"/>
</dbReference>
<dbReference type="InterPro" id="IPR009014">
    <property type="entry name" value="Transketo_C/PFOR_II"/>
</dbReference>
<dbReference type="InterPro" id="IPR005475">
    <property type="entry name" value="Transketolase-like_Pyr-bd"/>
</dbReference>
<dbReference type="InterPro" id="IPR020826">
    <property type="entry name" value="Transketolase_BS"/>
</dbReference>
<dbReference type="InterPro" id="IPR033248">
    <property type="entry name" value="Transketolase_C"/>
</dbReference>
<dbReference type="InterPro" id="IPR049557">
    <property type="entry name" value="Transketolase_CS"/>
</dbReference>
<dbReference type="NCBIfam" id="TIGR00204">
    <property type="entry name" value="dxs"/>
    <property type="match status" value="1"/>
</dbReference>
<dbReference type="NCBIfam" id="NF003933">
    <property type="entry name" value="PRK05444.2-2"/>
    <property type="match status" value="1"/>
</dbReference>
<dbReference type="PANTHER" id="PTHR43322">
    <property type="entry name" value="1-D-DEOXYXYLULOSE 5-PHOSPHATE SYNTHASE-RELATED"/>
    <property type="match status" value="1"/>
</dbReference>
<dbReference type="PANTHER" id="PTHR43322:SF5">
    <property type="entry name" value="1-DEOXY-D-XYLULOSE-5-PHOSPHATE SYNTHASE, CHLOROPLASTIC"/>
    <property type="match status" value="1"/>
</dbReference>
<dbReference type="Pfam" id="PF13292">
    <property type="entry name" value="DXP_synthase_N"/>
    <property type="match status" value="1"/>
</dbReference>
<dbReference type="Pfam" id="PF02779">
    <property type="entry name" value="Transket_pyr"/>
    <property type="match status" value="1"/>
</dbReference>
<dbReference type="Pfam" id="PF02780">
    <property type="entry name" value="Transketolase_C"/>
    <property type="match status" value="1"/>
</dbReference>
<dbReference type="SMART" id="SM00861">
    <property type="entry name" value="Transket_pyr"/>
    <property type="match status" value="1"/>
</dbReference>
<dbReference type="SUPFAM" id="SSF52518">
    <property type="entry name" value="Thiamin diphosphate-binding fold (THDP-binding)"/>
    <property type="match status" value="2"/>
</dbReference>
<dbReference type="SUPFAM" id="SSF52922">
    <property type="entry name" value="TK C-terminal domain-like"/>
    <property type="match status" value="1"/>
</dbReference>
<dbReference type="PROSITE" id="PS00801">
    <property type="entry name" value="TRANSKETOLASE_1"/>
    <property type="match status" value="1"/>
</dbReference>
<dbReference type="PROSITE" id="PS00802">
    <property type="entry name" value="TRANSKETOLASE_2"/>
    <property type="match status" value="1"/>
</dbReference>
<protein>
    <recommendedName>
        <fullName evidence="1">1-deoxy-D-xylulose-5-phosphate synthase</fullName>
        <ecNumber evidence="1">2.2.1.7</ecNumber>
    </recommendedName>
    <alternativeName>
        <fullName evidence="1">1-deoxyxylulose-5-phosphate synthase</fullName>
        <shortName evidence="1">DXP synthase</shortName>
        <shortName evidence="1">DXPS</shortName>
    </alternativeName>
</protein>
<gene>
    <name evidence="1" type="primary">dxs</name>
    <name type="ordered locus">Mpe_A2631</name>
</gene>